<feature type="chain" id="PRO_0000172726" description="Organic hydroperoxide resistance protein">
    <location>
        <begin position="1"/>
        <end position="142"/>
    </location>
</feature>
<organism>
    <name type="scientific">Xanthomonas campestris pv. phaseoli</name>
    <dbReference type="NCBI Taxonomy" id="317013"/>
    <lineage>
        <taxon>Bacteria</taxon>
        <taxon>Pseudomonadati</taxon>
        <taxon>Pseudomonadota</taxon>
        <taxon>Gammaproteobacteria</taxon>
        <taxon>Lysobacterales</taxon>
        <taxon>Lysobacteraceae</taxon>
        <taxon>Xanthomonas</taxon>
    </lineage>
</organism>
<reference key="1">
    <citation type="journal article" date="1998" name="J. Bacteriol.">
        <title>Identification and characterization of a new organic hydroperoxide resistance (ohr) gene with a novel pattern of oxidative stress regulation from Xanthomonas campestris pv. phaseoli.</title>
        <authorList>
            <person name="Mongkolsuk S."/>
            <person name="Praituan W."/>
            <person name="Loprasert S."/>
            <person name="Fuangthong M."/>
            <person name="Chamnongpol S."/>
        </authorList>
    </citation>
    <scope>NUCLEOTIDE SEQUENCE [GENOMIC DNA]</scope>
</reference>
<dbReference type="EMBL" id="AF036166">
    <property type="protein sequence ID" value="AAC38562.1"/>
    <property type="molecule type" value="Genomic_DNA"/>
</dbReference>
<dbReference type="RefSeq" id="WP_003488682.1">
    <property type="nucleotide sequence ID" value="NZ_OCZD01000157.1"/>
</dbReference>
<dbReference type="SMR" id="P0A0V5"/>
<dbReference type="eggNOG" id="COG1764">
    <property type="taxonomic scope" value="Bacteria"/>
</dbReference>
<dbReference type="GO" id="GO:0006979">
    <property type="term" value="P:response to oxidative stress"/>
    <property type="evidence" value="ECO:0007669"/>
    <property type="project" value="InterPro"/>
</dbReference>
<dbReference type="Gene3D" id="2.20.25.10">
    <property type="match status" value="1"/>
</dbReference>
<dbReference type="Gene3D" id="3.30.300.20">
    <property type="match status" value="1"/>
</dbReference>
<dbReference type="InterPro" id="IPR015946">
    <property type="entry name" value="KH_dom-like_a/b"/>
</dbReference>
<dbReference type="InterPro" id="IPR019953">
    <property type="entry name" value="OHR"/>
</dbReference>
<dbReference type="InterPro" id="IPR003718">
    <property type="entry name" value="OsmC/Ohr_fam"/>
</dbReference>
<dbReference type="InterPro" id="IPR036102">
    <property type="entry name" value="OsmC/Ohrsf"/>
</dbReference>
<dbReference type="NCBIfam" id="TIGR03561">
    <property type="entry name" value="organ_hyd_perox"/>
    <property type="match status" value="1"/>
</dbReference>
<dbReference type="PANTHER" id="PTHR33797">
    <property type="entry name" value="ORGANIC HYDROPEROXIDE RESISTANCE PROTEIN-LIKE"/>
    <property type="match status" value="1"/>
</dbReference>
<dbReference type="PANTHER" id="PTHR33797:SF2">
    <property type="entry name" value="ORGANIC HYDROPEROXIDE RESISTANCE PROTEIN-LIKE"/>
    <property type="match status" value="1"/>
</dbReference>
<dbReference type="Pfam" id="PF02566">
    <property type="entry name" value="OsmC"/>
    <property type="match status" value="1"/>
</dbReference>
<dbReference type="SUPFAM" id="SSF82784">
    <property type="entry name" value="OsmC-like"/>
    <property type="match status" value="1"/>
</dbReference>
<gene>
    <name type="primary">ohr</name>
</gene>
<evidence type="ECO:0000305" key="1"/>
<proteinExistence type="inferred from homology"/>
<protein>
    <recommendedName>
        <fullName>Organic hydroperoxide resistance protein</fullName>
    </recommendedName>
</protein>
<sequence length="142" mass="14483">MASPEKVLYTAHATATGGREGRAVSSDKALDAKLSTPRELGGAGGDGTNPEQLFAAGYAACFIGAMKAVAAQDKLKLPGEVSIDSSVGIGQIPGGFGIVVELRIAVPGMDKAELQTLVDKAHQVCPYSNATRGNIDVTLTLA</sequence>
<name>OHR_XANCH</name>
<accession>P0A0V5</accession>
<accession>O68390</accession>
<comment type="function">
    <text>Organic hydroperoxide detoxification protein. Confers increased resistance to tert-butyl hydroperoxide killing.</text>
</comment>
<comment type="similarity">
    <text evidence="1">Belongs to the OsmC/Ohr family.</text>
</comment>